<proteinExistence type="evidence at protein level"/>
<reference key="1">
    <citation type="journal article" date="2009" name="Toxicon">
        <title>Cysteine-rich venom proteins from the snakes of Viperinae subfamily - molecular cloning and phylogenetic relationship.</title>
        <authorList>
            <person name="Ramazanova A.S."/>
            <person name="Starkov V.G."/>
            <person name="Osipov A.V."/>
            <person name="Ziganshin R.H."/>
            <person name="Filkin S.Y."/>
            <person name="Tsetlin V.I."/>
            <person name="Utkin Y.N."/>
        </authorList>
    </citation>
    <scope>NUCLEOTIDE SEQUENCE [MRNA]</scope>
    <scope>IDENTIFICATION BY MASS SPECTROMETRY</scope>
    <source>
        <tissue>Venom</tissue>
        <tissue>Venom gland</tissue>
    </source>
</reference>
<feature type="signal peptide" evidence="1">
    <location>
        <begin position="1"/>
        <end position="19"/>
    </location>
</feature>
<feature type="chain" id="PRO_5000417203" description="Cysteine-rich venom protein">
    <location>
        <begin position="20"/>
        <end position="239"/>
    </location>
</feature>
<feature type="domain" description="SCP">
    <location>
        <begin position="39"/>
        <end position="166"/>
    </location>
</feature>
<feature type="domain" description="ShKT" evidence="2">
    <location>
        <begin position="202"/>
        <end position="234"/>
    </location>
</feature>
<feature type="disulfide bond" evidence="2">
    <location>
        <begin position="75"/>
        <end position="153"/>
    </location>
</feature>
<feature type="disulfide bond" evidence="2">
    <location>
        <begin position="92"/>
        <end position="167"/>
    </location>
</feature>
<feature type="disulfide bond" evidence="2">
    <location>
        <begin position="148"/>
        <end position="164"/>
    </location>
</feature>
<feature type="disulfide bond" evidence="2">
    <location>
        <begin position="186"/>
        <end position="193"/>
    </location>
</feature>
<feature type="disulfide bond" evidence="2">
    <location>
        <begin position="189"/>
        <end position="198"/>
    </location>
</feature>
<feature type="disulfide bond" evidence="2">
    <location>
        <begin position="202"/>
        <end position="234"/>
    </location>
</feature>
<feature type="disulfide bond" evidence="2">
    <location>
        <begin position="211"/>
        <end position="228"/>
    </location>
</feature>
<feature type="disulfide bond" evidence="2">
    <location>
        <begin position="219"/>
        <end position="232"/>
    </location>
</feature>
<protein>
    <recommendedName>
        <fullName>Cysteine-rich venom protein</fullName>
        <shortName>CRVP</shortName>
    </recommendedName>
</protein>
<accession>B7FDI1</accession>
<name>CRVP_VIPBE</name>
<keyword id="KW-0108">Calcium channel impairing toxin</keyword>
<keyword id="KW-1015">Disulfide bond</keyword>
<keyword id="KW-0872">Ion channel impairing toxin</keyword>
<keyword id="KW-0528">Neurotoxin</keyword>
<keyword id="KW-0964">Secreted</keyword>
<keyword id="KW-0732">Signal</keyword>
<keyword id="KW-0800">Toxin</keyword>
<dbReference type="EMBL" id="AM937250">
    <property type="protein sequence ID" value="CAP74089.1"/>
    <property type="molecule type" value="mRNA"/>
</dbReference>
<dbReference type="SMR" id="B7FDI1"/>
<dbReference type="GO" id="GO:0005576">
    <property type="term" value="C:extracellular region"/>
    <property type="evidence" value="ECO:0007669"/>
    <property type="project" value="UniProtKB-SubCell"/>
</dbReference>
<dbReference type="GO" id="GO:0005246">
    <property type="term" value="F:calcium channel regulator activity"/>
    <property type="evidence" value="ECO:0007669"/>
    <property type="project" value="UniProtKB-KW"/>
</dbReference>
<dbReference type="GO" id="GO:0090729">
    <property type="term" value="F:toxin activity"/>
    <property type="evidence" value="ECO:0007669"/>
    <property type="project" value="UniProtKB-KW"/>
</dbReference>
<dbReference type="CDD" id="cd05383">
    <property type="entry name" value="CAP_CRISP"/>
    <property type="match status" value="1"/>
</dbReference>
<dbReference type="FunFam" id="1.10.10.740:FF:000001">
    <property type="entry name" value="Cysteine-rich secretory protein 2"/>
    <property type="match status" value="1"/>
</dbReference>
<dbReference type="FunFam" id="3.40.33.10:FF:000005">
    <property type="entry name" value="Cysteine-rich secretory protein 2"/>
    <property type="match status" value="1"/>
</dbReference>
<dbReference type="Gene3D" id="3.40.33.10">
    <property type="entry name" value="CAP"/>
    <property type="match status" value="1"/>
</dbReference>
<dbReference type="Gene3D" id="1.10.10.740">
    <property type="entry name" value="Crisp domain"/>
    <property type="match status" value="1"/>
</dbReference>
<dbReference type="InterPro" id="IPR018244">
    <property type="entry name" value="Allrgn_V5/Tpx1_CS"/>
</dbReference>
<dbReference type="InterPro" id="IPR014044">
    <property type="entry name" value="CAP_dom"/>
</dbReference>
<dbReference type="InterPro" id="IPR035940">
    <property type="entry name" value="CAP_sf"/>
</dbReference>
<dbReference type="InterPro" id="IPR042076">
    <property type="entry name" value="Crisp-like_dom"/>
</dbReference>
<dbReference type="InterPro" id="IPR001283">
    <property type="entry name" value="CRISP-related"/>
</dbReference>
<dbReference type="InterPro" id="IPR013871">
    <property type="entry name" value="Cysteine_rich_secretory"/>
</dbReference>
<dbReference type="InterPro" id="IPR034117">
    <property type="entry name" value="SCP_CRISP"/>
</dbReference>
<dbReference type="InterPro" id="IPR003582">
    <property type="entry name" value="ShKT_dom"/>
</dbReference>
<dbReference type="InterPro" id="IPR002413">
    <property type="entry name" value="V5_allergen-like"/>
</dbReference>
<dbReference type="PANTHER" id="PTHR10334">
    <property type="entry name" value="CYSTEINE-RICH SECRETORY PROTEIN-RELATED"/>
    <property type="match status" value="1"/>
</dbReference>
<dbReference type="Pfam" id="PF00188">
    <property type="entry name" value="CAP"/>
    <property type="match status" value="1"/>
</dbReference>
<dbReference type="Pfam" id="PF08562">
    <property type="entry name" value="Crisp"/>
    <property type="match status" value="1"/>
</dbReference>
<dbReference type="PRINTS" id="PR00838">
    <property type="entry name" value="V5ALLERGEN"/>
</dbReference>
<dbReference type="PRINTS" id="PR00837">
    <property type="entry name" value="V5TPXLIKE"/>
</dbReference>
<dbReference type="SMART" id="SM00198">
    <property type="entry name" value="SCP"/>
    <property type="match status" value="1"/>
</dbReference>
<dbReference type="SUPFAM" id="SSF57546">
    <property type="entry name" value="Crisp domain-like"/>
    <property type="match status" value="1"/>
</dbReference>
<dbReference type="SUPFAM" id="SSF55797">
    <property type="entry name" value="PR-1-like"/>
    <property type="match status" value="1"/>
</dbReference>
<dbReference type="PROSITE" id="PS01009">
    <property type="entry name" value="CRISP_1"/>
    <property type="match status" value="1"/>
</dbReference>
<dbReference type="PROSITE" id="PS01010">
    <property type="entry name" value="CRISP_2"/>
    <property type="match status" value="1"/>
</dbReference>
<dbReference type="PROSITE" id="PS51670">
    <property type="entry name" value="SHKT"/>
    <property type="match status" value="1"/>
</dbReference>
<organism>
    <name type="scientific">Vipera berus</name>
    <name type="common">Common European adder</name>
    <name type="synonym">Coluber berus</name>
    <dbReference type="NCBI Taxonomy" id="31155"/>
    <lineage>
        <taxon>Eukaryota</taxon>
        <taxon>Metazoa</taxon>
        <taxon>Chordata</taxon>
        <taxon>Craniata</taxon>
        <taxon>Vertebrata</taxon>
        <taxon>Euteleostomi</taxon>
        <taxon>Lepidosauria</taxon>
        <taxon>Squamata</taxon>
        <taxon>Bifurcata</taxon>
        <taxon>Unidentata</taxon>
        <taxon>Episquamata</taxon>
        <taxon>Toxicofera</taxon>
        <taxon>Serpentes</taxon>
        <taxon>Colubroidea</taxon>
        <taxon>Viperidae</taxon>
        <taxon>Viperinae</taxon>
        <taxon>Vipera</taxon>
    </lineage>
</organism>
<comment type="function">
    <text evidence="1">Blocks contraction of smooth muscle elicited by high potassium-induced depolarization, but does not block caffeine-stimulated contraction. May target voltage-gated calcium channels in smooth muscle (By similarity).</text>
</comment>
<comment type="subcellular location">
    <subcellularLocation>
        <location>Secreted</location>
    </subcellularLocation>
</comment>
<comment type="tissue specificity">
    <text>Expressed by the venom gland.</text>
</comment>
<comment type="similarity">
    <text evidence="3">Belongs to the CRISP family.</text>
</comment>
<sequence>MIAFLVLPILAAVLQQSSGNVDFDSESPRKPEIQNEIIDLHNSLRRSVNPTASNMLKMEWYPEAAANAERWAFRCILSHSPRDSRVIGGIKCGENIYMSTSPMKWTAIIHEWHGEEKDFVYGQGASPANAVVGHYTQIVWYKSYRSGCAAAYCPSSEYKYFYVCQYCPAGNMQGKTATPYTSGPPCGDCPSACDNGLCTNPCTHEDKFTNCKDLVKQGCNNNYLKTNCPASCSCHNEII</sequence>
<evidence type="ECO:0000250" key="1"/>
<evidence type="ECO:0000255" key="2">
    <source>
        <dbReference type="PROSITE-ProRule" id="PRU01005"/>
    </source>
</evidence>
<evidence type="ECO:0000305" key="3"/>